<dbReference type="EC" id="2.5.1.6" evidence="1"/>
<dbReference type="EMBL" id="CP000489">
    <property type="protein sequence ID" value="ABL69968.1"/>
    <property type="molecule type" value="Genomic_DNA"/>
</dbReference>
<dbReference type="RefSeq" id="WP_011748165.1">
    <property type="nucleotide sequence ID" value="NC_008686.1"/>
</dbReference>
<dbReference type="SMR" id="A1B374"/>
<dbReference type="STRING" id="318586.Pden_1873"/>
<dbReference type="EnsemblBacteria" id="ABL69968">
    <property type="protein sequence ID" value="ABL69968"/>
    <property type="gene ID" value="Pden_1873"/>
</dbReference>
<dbReference type="GeneID" id="93450271"/>
<dbReference type="KEGG" id="pde:Pden_1873"/>
<dbReference type="eggNOG" id="COG0192">
    <property type="taxonomic scope" value="Bacteria"/>
</dbReference>
<dbReference type="HOGENOM" id="CLU_041802_1_1_5"/>
<dbReference type="OrthoDB" id="9801686at2"/>
<dbReference type="UniPathway" id="UPA00315">
    <property type="reaction ID" value="UER00080"/>
</dbReference>
<dbReference type="Proteomes" id="UP000000361">
    <property type="component" value="Chromosome 1"/>
</dbReference>
<dbReference type="GO" id="GO:0005737">
    <property type="term" value="C:cytoplasm"/>
    <property type="evidence" value="ECO:0007669"/>
    <property type="project" value="UniProtKB-SubCell"/>
</dbReference>
<dbReference type="GO" id="GO:0005524">
    <property type="term" value="F:ATP binding"/>
    <property type="evidence" value="ECO:0007669"/>
    <property type="project" value="UniProtKB-UniRule"/>
</dbReference>
<dbReference type="GO" id="GO:0000287">
    <property type="term" value="F:magnesium ion binding"/>
    <property type="evidence" value="ECO:0007669"/>
    <property type="project" value="UniProtKB-UniRule"/>
</dbReference>
<dbReference type="GO" id="GO:0004478">
    <property type="term" value="F:methionine adenosyltransferase activity"/>
    <property type="evidence" value="ECO:0007669"/>
    <property type="project" value="UniProtKB-UniRule"/>
</dbReference>
<dbReference type="GO" id="GO:0006730">
    <property type="term" value="P:one-carbon metabolic process"/>
    <property type="evidence" value="ECO:0007669"/>
    <property type="project" value="UniProtKB-KW"/>
</dbReference>
<dbReference type="GO" id="GO:0006556">
    <property type="term" value="P:S-adenosylmethionine biosynthetic process"/>
    <property type="evidence" value="ECO:0007669"/>
    <property type="project" value="UniProtKB-UniRule"/>
</dbReference>
<dbReference type="CDD" id="cd18079">
    <property type="entry name" value="S-AdoMet_synt"/>
    <property type="match status" value="1"/>
</dbReference>
<dbReference type="FunFam" id="3.30.300.10:FF:000003">
    <property type="entry name" value="S-adenosylmethionine synthase"/>
    <property type="match status" value="1"/>
</dbReference>
<dbReference type="Gene3D" id="3.30.300.10">
    <property type="match status" value="3"/>
</dbReference>
<dbReference type="HAMAP" id="MF_00086">
    <property type="entry name" value="S_AdoMet_synth1"/>
    <property type="match status" value="1"/>
</dbReference>
<dbReference type="InterPro" id="IPR022631">
    <property type="entry name" value="ADOMET_SYNTHASE_CS"/>
</dbReference>
<dbReference type="InterPro" id="IPR022630">
    <property type="entry name" value="S-AdoMet_synt_C"/>
</dbReference>
<dbReference type="InterPro" id="IPR022629">
    <property type="entry name" value="S-AdoMet_synt_central"/>
</dbReference>
<dbReference type="InterPro" id="IPR022628">
    <property type="entry name" value="S-AdoMet_synt_N"/>
</dbReference>
<dbReference type="InterPro" id="IPR002133">
    <property type="entry name" value="S-AdoMet_synthetase"/>
</dbReference>
<dbReference type="InterPro" id="IPR022636">
    <property type="entry name" value="S-AdoMet_synthetase_sfam"/>
</dbReference>
<dbReference type="NCBIfam" id="TIGR01034">
    <property type="entry name" value="metK"/>
    <property type="match status" value="1"/>
</dbReference>
<dbReference type="PANTHER" id="PTHR11964">
    <property type="entry name" value="S-ADENOSYLMETHIONINE SYNTHETASE"/>
    <property type="match status" value="1"/>
</dbReference>
<dbReference type="Pfam" id="PF02773">
    <property type="entry name" value="S-AdoMet_synt_C"/>
    <property type="match status" value="1"/>
</dbReference>
<dbReference type="Pfam" id="PF02772">
    <property type="entry name" value="S-AdoMet_synt_M"/>
    <property type="match status" value="1"/>
</dbReference>
<dbReference type="Pfam" id="PF00438">
    <property type="entry name" value="S-AdoMet_synt_N"/>
    <property type="match status" value="1"/>
</dbReference>
<dbReference type="PIRSF" id="PIRSF000497">
    <property type="entry name" value="MAT"/>
    <property type="match status" value="1"/>
</dbReference>
<dbReference type="SUPFAM" id="SSF55973">
    <property type="entry name" value="S-adenosylmethionine synthetase"/>
    <property type="match status" value="3"/>
</dbReference>
<dbReference type="PROSITE" id="PS00376">
    <property type="entry name" value="ADOMET_SYNTHASE_1"/>
    <property type="match status" value="1"/>
</dbReference>
<dbReference type="PROSITE" id="PS00377">
    <property type="entry name" value="ADOMET_SYNTHASE_2"/>
    <property type="match status" value="1"/>
</dbReference>
<evidence type="ECO:0000255" key="1">
    <source>
        <dbReference type="HAMAP-Rule" id="MF_00086"/>
    </source>
</evidence>
<name>METK_PARDP</name>
<proteinExistence type="inferred from homology"/>
<organism>
    <name type="scientific">Paracoccus denitrificans (strain Pd 1222)</name>
    <dbReference type="NCBI Taxonomy" id="318586"/>
    <lineage>
        <taxon>Bacteria</taxon>
        <taxon>Pseudomonadati</taxon>
        <taxon>Pseudomonadota</taxon>
        <taxon>Alphaproteobacteria</taxon>
        <taxon>Rhodobacterales</taxon>
        <taxon>Paracoccaceae</taxon>
        <taxon>Paracoccus</taxon>
    </lineage>
</organism>
<keyword id="KW-0067">ATP-binding</keyword>
<keyword id="KW-0963">Cytoplasm</keyword>
<keyword id="KW-0460">Magnesium</keyword>
<keyword id="KW-0479">Metal-binding</keyword>
<keyword id="KW-0547">Nucleotide-binding</keyword>
<keyword id="KW-0554">One-carbon metabolism</keyword>
<keyword id="KW-0630">Potassium</keyword>
<keyword id="KW-1185">Reference proteome</keyword>
<keyword id="KW-0808">Transferase</keyword>
<sequence>MARQDYVFTSESVSEGHPDKLCDQISDAVLDALLAEDPAARVACEAFATTGTVVIGGEIGLSDKKKLGEYMGRIAEIARNTIRDIGYEQEKFHWNTCHVHNYLHEQSAHISQGVDRDGAGDQGIMFGYAVDETPELMPAPIQYAHAILRRLAEARKSGAEPTLGPDAKSQLSLRYENGKPVEITSLVLSHQHKDESQTSDDIRAIVEPYIREVLPAEWLTERTEWWVNPTGTFVIGGPDGDAGLTGRKIIVDTYGGAAPHGGGAFSGKDPTKVDRSAAYAARYLAKNVVAAGLAKRCVIQLSYAIGVAKPLSIYADTFGTSEVPEAEIERAVSRAMDLTPRGIREHLALCRPIYRRTAAYGHFGRAPDADGGFSWERTDLVEAIKREL</sequence>
<reference key="1">
    <citation type="submission" date="2006-12" db="EMBL/GenBank/DDBJ databases">
        <title>Complete sequence of chromosome 1 of Paracoccus denitrificans PD1222.</title>
        <authorList>
            <person name="Copeland A."/>
            <person name="Lucas S."/>
            <person name="Lapidus A."/>
            <person name="Barry K."/>
            <person name="Detter J.C."/>
            <person name="Glavina del Rio T."/>
            <person name="Hammon N."/>
            <person name="Israni S."/>
            <person name="Dalin E."/>
            <person name="Tice H."/>
            <person name="Pitluck S."/>
            <person name="Munk A.C."/>
            <person name="Brettin T."/>
            <person name="Bruce D."/>
            <person name="Han C."/>
            <person name="Tapia R."/>
            <person name="Gilna P."/>
            <person name="Schmutz J."/>
            <person name="Larimer F."/>
            <person name="Land M."/>
            <person name="Hauser L."/>
            <person name="Kyrpides N."/>
            <person name="Lykidis A."/>
            <person name="Spiro S."/>
            <person name="Richardson D.J."/>
            <person name="Moir J.W.B."/>
            <person name="Ferguson S.J."/>
            <person name="van Spanning R.J.M."/>
            <person name="Richardson P."/>
        </authorList>
    </citation>
    <scope>NUCLEOTIDE SEQUENCE [LARGE SCALE GENOMIC DNA]</scope>
    <source>
        <strain>Pd 1222</strain>
    </source>
</reference>
<feature type="chain" id="PRO_0000302954" description="S-adenosylmethionine synthase">
    <location>
        <begin position="1"/>
        <end position="388"/>
    </location>
</feature>
<feature type="region of interest" description="Flexible loop" evidence="1">
    <location>
        <begin position="106"/>
        <end position="116"/>
    </location>
</feature>
<feature type="binding site" description="in other chain" evidence="1">
    <location>
        <position position="17"/>
    </location>
    <ligand>
        <name>ATP</name>
        <dbReference type="ChEBI" id="CHEBI:30616"/>
        <note>ligand shared between two neighboring subunits</note>
    </ligand>
</feature>
<feature type="binding site" evidence="1">
    <location>
        <position position="19"/>
    </location>
    <ligand>
        <name>Mg(2+)</name>
        <dbReference type="ChEBI" id="CHEBI:18420"/>
    </ligand>
</feature>
<feature type="binding site" evidence="1">
    <location>
        <position position="45"/>
    </location>
    <ligand>
        <name>K(+)</name>
        <dbReference type="ChEBI" id="CHEBI:29103"/>
    </ligand>
</feature>
<feature type="binding site" description="in other chain" evidence="1">
    <location>
        <position position="58"/>
    </location>
    <ligand>
        <name>L-methionine</name>
        <dbReference type="ChEBI" id="CHEBI:57844"/>
        <note>ligand shared between two neighboring subunits</note>
    </ligand>
</feature>
<feature type="binding site" description="in other chain" evidence="1">
    <location>
        <position position="106"/>
    </location>
    <ligand>
        <name>L-methionine</name>
        <dbReference type="ChEBI" id="CHEBI:57844"/>
        <note>ligand shared between two neighboring subunits</note>
    </ligand>
</feature>
<feature type="binding site" description="in other chain" evidence="1">
    <location>
        <begin position="166"/>
        <end position="168"/>
    </location>
    <ligand>
        <name>ATP</name>
        <dbReference type="ChEBI" id="CHEBI:30616"/>
        <note>ligand shared between two neighboring subunits</note>
    </ligand>
</feature>
<feature type="binding site" evidence="1">
    <location>
        <position position="241"/>
    </location>
    <ligand>
        <name>ATP</name>
        <dbReference type="ChEBI" id="CHEBI:30616"/>
        <note>ligand shared between two neighboring subunits</note>
    </ligand>
</feature>
<feature type="binding site" evidence="1">
    <location>
        <position position="241"/>
    </location>
    <ligand>
        <name>L-methionine</name>
        <dbReference type="ChEBI" id="CHEBI:57844"/>
        <note>ligand shared between two neighboring subunits</note>
    </ligand>
</feature>
<feature type="binding site" description="in other chain" evidence="1">
    <location>
        <begin position="247"/>
        <end position="248"/>
    </location>
    <ligand>
        <name>ATP</name>
        <dbReference type="ChEBI" id="CHEBI:30616"/>
        <note>ligand shared between two neighboring subunits</note>
    </ligand>
</feature>
<feature type="binding site" evidence="1">
    <location>
        <position position="264"/>
    </location>
    <ligand>
        <name>ATP</name>
        <dbReference type="ChEBI" id="CHEBI:30616"/>
        <note>ligand shared between two neighboring subunits</note>
    </ligand>
</feature>
<feature type="binding site" evidence="1">
    <location>
        <position position="268"/>
    </location>
    <ligand>
        <name>ATP</name>
        <dbReference type="ChEBI" id="CHEBI:30616"/>
        <note>ligand shared between two neighboring subunits</note>
    </ligand>
</feature>
<feature type="binding site" description="in other chain" evidence="1">
    <location>
        <position position="272"/>
    </location>
    <ligand>
        <name>L-methionine</name>
        <dbReference type="ChEBI" id="CHEBI:57844"/>
        <note>ligand shared between two neighboring subunits</note>
    </ligand>
</feature>
<comment type="function">
    <text evidence="1">Catalyzes the formation of S-adenosylmethionine (AdoMet) from methionine and ATP. The overall synthetic reaction is composed of two sequential steps, AdoMet formation and the subsequent tripolyphosphate hydrolysis which occurs prior to release of AdoMet from the enzyme.</text>
</comment>
<comment type="catalytic activity">
    <reaction evidence="1">
        <text>L-methionine + ATP + H2O = S-adenosyl-L-methionine + phosphate + diphosphate</text>
        <dbReference type="Rhea" id="RHEA:21080"/>
        <dbReference type="ChEBI" id="CHEBI:15377"/>
        <dbReference type="ChEBI" id="CHEBI:30616"/>
        <dbReference type="ChEBI" id="CHEBI:33019"/>
        <dbReference type="ChEBI" id="CHEBI:43474"/>
        <dbReference type="ChEBI" id="CHEBI:57844"/>
        <dbReference type="ChEBI" id="CHEBI:59789"/>
        <dbReference type="EC" id="2.5.1.6"/>
    </reaction>
</comment>
<comment type="cofactor">
    <cofactor evidence="1">
        <name>Mg(2+)</name>
        <dbReference type="ChEBI" id="CHEBI:18420"/>
    </cofactor>
    <text evidence="1">Binds 2 divalent ions per subunit.</text>
</comment>
<comment type="cofactor">
    <cofactor evidence="1">
        <name>K(+)</name>
        <dbReference type="ChEBI" id="CHEBI:29103"/>
    </cofactor>
    <text evidence="1">Binds 1 potassium ion per subunit.</text>
</comment>
<comment type="pathway">
    <text evidence="1">Amino-acid biosynthesis; S-adenosyl-L-methionine biosynthesis; S-adenosyl-L-methionine from L-methionine: step 1/1.</text>
</comment>
<comment type="subunit">
    <text evidence="1">Homotetramer; dimer of dimers.</text>
</comment>
<comment type="subcellular location">
    <subcellularLocation>
        <location evidence="1">Cytoplasm</location>
    </subcellularLocation>
</comment>
<comment type="similarity">
    <text evidence="1">Belongs to the AdoMet synthase family.</text>
</comment>
<accession>A1B374</accession>
<protein>
    <recommendedName>
        <fullName evidence="1">S-adenosylmethionine synthase</fullName>
        <shortName evidence="1">AdoMet synthase</shortName>
        <ecNumber evidence="1">2.5.1.6</ecNumber>
    </recommendedName>
    <alternativeName>
        <fullName evidence="1">MAT</fullName>
    </alternativeName>
    <alternativeName>
        <fullName evidence="1">Methionine adenosyltransferase</fullName>
    </alternativeName>
</protein>
<gene>
    <name evidence="1" type="primary">metK</name>
    <name type="ordered locus">Pden_1873</name>
</gene>